<evidence type="ECO:0000255" key="1">
    <source>
        <dbReference type="HAMAP-Rule" id="MF_01393"/>
    </source>
</evidence>
<keyword id="KW-0066">ATP synthesis</keyword>
<keyword id="KW-1003">Cell membrane</keyword>
<keyword id="KW-0138">CF(0)</keyword>
<keyword id="KW-0375">Hydrogen ion transport</keyword>
<keyword id="KW-0406">Ion transport</keyword>
<keyword id="KW-0472">Membrane</keyword>
<keyword id="KW-1185">Reference proteome</keyword>
<keyword id="KW-0812">Transmembrane</keyword>
<keyword id="KW-1133">Transmembrane helix</keyword>
<keyword id="KW-0813">Transport</keyword>
<organism>
    <name type="scientific">Mycobacterium marinum (strain ATCC BAA-535 / M)</name>
    <dbReference type="NCBI Taxonomy" id="216594"/>
    <lineage>
        <taxon>Bacteria</taxon>
        <taxon>Bacillati</taxon>
        <taxon>Actinomycetota</taxon>
        <taxon>Actinomycetes</taxon>
        <taxon>Mycobacteriales</taxon>
        <taxon>Mycobacteriaceae</taxon>
        <taxon>Mycobacterium</taxon>
        <taxon>Mycobacterium ulcerans group</taxon>
    </lineage>
</organism>
<comment type="function">
    <text evidence="1">Key component of the proton channel; it plays a direct role in the translocation of protons across the membrane.</text>
</comment>
<comment type="subunit">
    <text evidence="1">F-type ATPases have 2 components, CF(1) - the catalytic core - and CF(0) - the membrane proton channel. CF(1) has five subunits: alpha(3), beta(3), gamma(1), delta(1), epsilon(1). CF(0) has three main subunits: a(1), b(2) and c(9-12). The alpha and beta chains form an alternating ring which encloses part of the gamma chain. CF(1) is attached to CF(0) by a central stalk formed by the gamma and epsilon chains, while a peripheral stalk is formed by the delta and b chains.</text>
</comment>
<comment type="subcellular location">
    <subcellularLocation>
        <location evidence="1">Cell membrane</location>
        <topology evidence="1">Multi-pass membrane protein</topology>
    </subcellularLocation>
</comment>
<comment type="similarity">
    <text evidence="1">Belongs to the ATPase A chain family.</text>
</comment>
<sequence length="250" mass="27355">MTESILAAQIEVGEHHTATWLGMTVNTDTVLSTAIAALIVLALAFYLRSKVTSTAVPGGVQLFFEAITIQMRGQVESAIGMRIAPFVLPLAVTIFVFILISNWLSVLPVQYTDEHGQTTELLKPAAADINYVLALALFVFVCYHAAGIWRRGIVGHPIKLLKGHVAILAPINLVEEIAKPISLSLRLFGNIFAGGILVALIALFPPYIMWAPNAIWKSFDLFVGAIQAFIFALLTILYFSQAMELEEDHH</sequence>
<accession>B2HQK8</accession>
<name>ATP6_MYCMM</name>
<gene>
    <name evidence="1" type="primary">atpB</name>
    <name type="ordered locus">MMAR_4093</name>
</gene>
<feature type="chain" id="PRO_1000145290" description="ATP synthase subunit a">
    <location>
        <begin position="1"/>
        <end position="250"/>
    </location>
</feature>
<feature type="transmembrane region" description="Helical" evidence="1">
    <location>
        <begin position="27"/>
        <end position="47"/>
    </location>
</feature>
<feature type="transmembrane region" description="Helical" evidence="1">
    <location>
        <begin position="83"/>
        <end position="103"/>
    </location>
</feature>
<feature type="transmembrane region" description="Helical" evidence="1">
    <location>
        <begin position="129"/>
        <end position="149"/>
    </location>
</feature>
<feature type="transmembrane region" description="Helical" evidence="1">
    <location>
        <begin position="191"/>
        <end position="211"/>
    </location>
</feature>
<feature type="transmembrane region" description="Helical" evidence="1">
    <location>
        <begin position="219"/>
        <end position="239"/>
    </location>
</feature>
<protein>
    <recommendedName>
        <fullName evidence="1">ATP synthase subunit a</fullName>
    </recommendedName>
    <alternativeName>
        <fullName evidence="1">ATP synthase F0 sector subunit a</fullName>
    </alternativeName>
    <alternativeName>
        <fullName evidence="1">F-ATPase subunit 6</fullName>
    </alternativeName>
</protein>
<proteinExistence type="inferred from homology"/>
<dbReference type="EMBL" id="CP000854">
    <property type="protein sequence ID" value="ACC42500.1"/>
    <property type="molecule type" value="Genomic_DNA"/>
</dbReference>
<dbReference type="RefSeq" id="WP_012395675.1">
    <property type="nucleotide sequence ID" value="NC_010612.1"/>
</dbReference>
<dbReference type="SMR" id="B2HQK8"/>
<dbReference type="STRING" id="216594.MMAR_4093"/>
<dbReference type="GeneID" id="93438309"/>
<dbReference type="KEGG" id="mmi:MMAR_4093"/>
<dbReference type="eggNOG" id="COG0356">
    <property type="taxonomic scope" value="Bacteria"/>
</dbReference>
<dbReference type="HOGENOM" id="CLU_041018_2_3_11"/>
<dbReference type="OrthoDB" id="9809130at2"/>
<dbReference type="Proteomes" id="UP000001190">
    <property type="component" value="Chromosome"/>
</dbReference>
<dbReference type="GO" id="GO:0005886">
    <property type="term" value="C:plasma membrane"/>
    <property type="evidence" value="ECO:0007669"/>
    <property type="project" value="UniProtKB-SubCell"/>
</dbReference>
<dbReference type="GO" id="GO:0045259">
    <property type="term" value="C:proton-transporting ATP synthase complex"/>
    <property type="evidence" value="ECO:0007669"/>
    <property type="project" value="UniProtKB-KW"/>
</dbReference>
<dbReference type="GO" id="GO:0046933">
    <property type="term" value="F:proton-transporting ATP synthase activity, rotational mechanism"/>
    <property type="evidence" value="ECO:0007669"/>
    <property type="project" value="UniProtKB-UniRule"/>
</dbReference>
<dbReference type="GO" id="GO:0042777">
    <property type="term" value="P:proton motive force-driven plasma membrane ATP synthesis"/>
    <property type="evidence" value="ECO:0007669"/>
    <property type="project" value="TreeGrafter"/>
</dbReference>
<dbReference type="CDD" id="cd00310">
    <property type="entry name" value="ATP-synt_Fo_a_6"/>
    <property type="match status" value="1"/>
</dbReference>
<dbReference type="FunFam" id="1.20.120.220:FF:000009">
    <property type="entry name" value="ATP synthase subunit a"/>
    <property type="match status" value="1"/>
</dbReference>
<dbReference type="Gene3D" id="1.20.120.220">
    <property type="entry name" value="ATP synthase, F0 complex, subunit A"/>
    <property type="match status" value="1"/>
</dbReference>
<dbReference type="HAMAP" id="MF_01393">
    <property type="entry name" value="ATP_synth_a_bact"/>
    <property type="match status" value="1"/>
</dbReference>
<dbReference type="InterPro" id="IPR045082">
    <property type="entry name" value="ATP_syn_F0_a_bact/chloroplast"/>
</dbReference>
<dbReference type="InterPro" id="IPR000568">
    <property type="entry name" value="ATP_synth_F0_asu"/>
</dbReference>
<dbReference type="InterPro" id="IPR023011">
    <property type="entry name" value="ATP_synth_F0_asu_AS"/>
</dbReference>
<dbReference type="InterPro" id="IPR035908">
    <property type="entry name" value="F0_ATP_A_sf"/>
</dbReference>
<dbReference type="NCBIfam" id="TIGR01131">
    <property type="entry name" value="ATP_synt_6_or_A"/>
    <property type="match status" value="1"/>
</dbReference>
<dbReference type="PANTHER" id="PTHR42823">
    <property type="entry name" value="ATP SYNTHASE SUBUNIT A, CHLOROPLASTIC"/>
    <property type="match status" value="1"/>
</dbReference>
<dbReference type="PANTHER" id="PTHR42823:SF3">
    <property type="entry name" value="ATP SYNTHASE SUBUNIT A, CHLOROPLASTIC"/>
    <property type="match status" value="1"/>
</dbReference>
<dbReference type="Pfam" id="PF00119">
    <property type="entry name" value="ATP-synt_A"/>
    <property type="match status" value="1"/>
</dbReference>
<dbReference type="PRINTS" id="PR00123">
    <property type="entry name" value="ATPASEA"/>
</dbReference>
<dbReference type="SUPFAM" id="SSF81336">
    <property type="entry name" value="F1F0 ATP synthase subunit A"/>
    <property type="match status" value="1"/>
</dbReference>
<dbReference type="PROSITE" id="PS00449">
    <property type="entry name" value="ATPASE_A"/>
    <property type="match status" value="1"/>
</dbReference>
<reference key="1">
    <citation type="journal article" date="2008" name="Genome Res.">
        <title>Insights from the complete genome sequence of Mycobacterium marinum on the evolution of Mycobacterium tuberculosis.</title>
        <authorList>
            <person name="Stinear T.P."/>
            <person name="Seemann T."/>
            <person name="Harrison P.F."/>
            <person name="Jenkin G.A."/>
            <person name="Davies J.K."/>
            <person name="Johnson P.D."/>
            <person name="Abdellah Z."/>
            <person name="Arrowsmith C."/>
            <person name="Chillingworth T."/>
            <person name="Churcher C."/>
            <person name="Clarke K."/>
            <person name="Cronin A."/>
            <person name="Davis P."/>
            <person name="Goodhead I."/>
            <person name="Holroyd N."/>
            <person name="Jagels K."/>
            <person name="Lord A."/>
            <person name="Moule S."/>
            <person name="Mungall K."/>
            <person name="Norbertczak H."/>
            <person name="Quail M.A."/>
            <person name="Rabbinowitsch E."/>
            <person name="Walker D."/>
            <person name="White B."/>
            <person name="Whitehead S."/>
            <person name="Small P.L."/>
            <person name="Brosch R."/>
            <person name="Ramakrishnan L."/>
            <person name="Fischbach M.A."/>
            <person name="Parkhill J."/>
            <person name="Cole S.T."/>
        </authorList>
    </citation>
    <scope>NUCLEOTIDE SEQUENCE [LARGE SCALE GENOMIC DNA]</scope>
    <source>
        <strain>ATCC BAA-535 / M</strain>
    </source>
</reference>